<feature type="chain" id="PRO_0000298882" description="Orotate phosphoribosyltransferase">
    <location>
        <begin position="1"/>
        <end position="200"/>
    </location>
</feature>
<feature type="binding site" evidence="1">
    <location>
        <position position="95"/>
    </location>
    <ligand>
        <name>5-phospho-alpha-D-ribose 1-diphosphate</name>
        <dbReference type="ChEBI" id="CHEBI:58017"/>
        <note>ligand shared between dimeric partners</note>
    </ligand>
</feature>
<feature type="binding site" evidence="1">
    <location>
        <position position="99"/>
    </location>
    <ligand>
        <name>5-phospho-alpha-D-ribose 1-diphosphate</name>
        <dbReference type="ChEBI" id="CHEBI:58017"/>
        <note>ligand shared between dimeric partners</note>
    </ligand>
</feature>
<feature type="binding site" evidence="1">
    <location>
        <position position="101"/>
    </location>
    <ligand>
        <name>5-phospho-alpha-D-ribose 1-diphosphate</name>
        <dbReference type="ChEBI" id="CHEBI:58017"/>
        <note>ligand shared between dimeric partners</note>
    </ligand>
</feature>
<feature type="binding site" description="in other chain" evidence="1">
    <location>
        <begin position="121"/>
        <end position="129"/>
    </location>
    <ligand>
        <name>5-phospho-alpha-D-ribose 1-diphosphate</name>
        <dbReference type="ChEBI" id="CHEBI:58017"/>
        <note>ligand shared between dimeric partners</note>
    </ligand>
</feature>
<feature type="binding site" evidence="1">
    <location>
        <position position="125"/>
    </location>
    <ligand>
        <name>orotate</name>
        <dbReference type="ChEBI" id="CHEBI:30839"/>
    </ligand>
</feature>
<feature type="binding site" evidence="1">
    <location>
        <position position="153"/>
    </location>
    <ligand>
        <name>orotate</name>
        <dbReference type="ChEBI" id="CHEBI:30839"/>
    </ligand>
</feature>
<reference key="1">
    <citation type="journal article" date="2006" name="Proc. Natl. Acad. Sci. U.S.A.">
        <title>Genomic analysis of the uncultivated marine crenarchaeote Cenarchaeum symbiosum.</title>
        <authorList>
            <person name="Hallam S.J."/>
            <person name="Konstantinidis K.T."/>
            <person name="Putnam N."/>
            <person name="Schleper C."/>
            <person name="Watanabe Y."/>
            <person name="Sugahara J."/>
            <person name="Preston C."/>
            <person name="de la Torre J."/>
            <person name="Richardson P.M."/>
            <person name="DeLong E.F."/>
        </authorList>
    </citation>
    <scope>NUCLEOTIDE SEQUENCE [LARGE SCALE GENOMIC DNA]</scope>
    <source>
        <strain>A</strain>
    </source>
</reference>
<dbReference type="EC" id="2.4.2.10" evidence="1"/>
<dbReference type="EMBL" id="DP000238">
    <property type="protein sequence ID" value="ABK78302.1"/>
    <property type="molecule type" value="Genomic_DNA"/>
</dbReference>
<dbReference type="SMR" id="A0RY85"/>
<dbReference type="STRING" id="414004.CENSYa_1686"/>
<dbReference type="EnsemblBacteria" id="ABK78302">
    <property type="protein sequence ID" value="ABK78302"/>
    <property type="gene ID" value="CENSYa_1686"/>
</dbReference>
<dbReference type="KEGG" id="csy:CENSYa_1686"/>
<dbReference type="HOGENOM" id="CLU_074878_2_0_2"/>
<dbReference type="UniPathway" id="UPA00070">
    <property type="reaction ID" value="UER00119"/>
</dbReference>
<dbReference type="Proteomes" id="UP000000758">
    <property type="component" value="Chromosome"/>
</dbReference>
<dbReference type="GO" id="GO:0000287">
    <property type="term" value="F:magnesium ion binding"/>
    <property type="evidence" value="ECO:0007669"/>
    <property type="project" value="UniProtKB-UniRule"/>
</dbReference>
<dbReference type="GO" id="GO:0004588">
    <property type="term" value="F:orotate phosphoribosyltransferase activity"/>
    <property type="evidence" value="ECO:0007669"/>
    <property type="project" value="UniProtKB-UniRule"/>
</dbReference>
<dbReference type="GO" id="GO:0044205">
    <property type="term" value="P:'de novo' UMP biosynthetic process"/>
    <property type="evidence" value="ECO:0007669"/>
    <property type="project" value="UniProtKB-UniRule"/>
</dbReference>
<dbReference type="GO" id="GO:0019856">
    <property type="term" value="P:pyrimidine nucleobase biosynthetic process"/>
    <property type="evidence" value="ECO:0007669"/>
    <property type="project" value="TreeGrafter"/>
</dbReference>
<dbReference type="CDD" id="cd06223">
    <property type="entry name" value="PRTases_typeI"/>
    <property type="match status" value="1"/>
</dbReference>
<dbReference type="Gene3D" id="3.40.50.2020">
    <property type="match status" value="1"/>
</dbReference>
<dbReference type="HAMAP" id="MF_01208">
    <property type="entry name" value="PyrE"/>
    <property type="match status" value="1"/>
</dbReference>
<dbReference type="InterPro" id="IPR023031">
    <property type="entry name" value="OPRT"/>
</dbReference>
<dbReference type="InterPro" id="IPR004467">
    <property type="entry name" value="Or_phspho_trans_dom"/>
</dbReference>
<dbReference type="InterPro" id="IPR000836">
    <property type="entry name" value="PRibTrfase_dom"/>
</dbReference>
<dbReference type="InterPro" id="IPR029057">
    <property type="entry name" value="PRTase-like"/>
</dbReference>
<dbReference type="NCBIfam" id="TIGR00336">
    <property type="entry name" value="pyrE"/>
    <property type="match status" value="1"/>
</dbReference>
<dbReference type="PANTHER" id="PTHR19278">
    <property type="entry name" value="OROTATE PHOSPHORIBOSYLTRANSFERASE"/>
    <property type="match status" value="1"/>
</dbReference>
<dbReference type="PANTHER" id="PTHR19278:SF9">
    <property type="entry name" value="URIDINE 5'-MONOPHOSPHATE SYNTHASE"/>
    <property type="match status" value="1"/>
</dbReference>
<dbReference type="Pfam" id="PF00156">
    <property type="entry name" value="Pribosyltran"/>
    <property type="match status" value="1"/>
</dbReference>
<dbReference type="SUPFAM" id="SSF53271">
    <property type="entry name" value="PRTase-like"/>
    <property type="match status" value="1"/>
</dbReference>
<comment type="function">
    <text evidence="1">Catalyzes the transfer of a ribosyl phosphate group from 5-phosphoribose 1-diphosphate to orotate, leading to the formation of orotidine monophosphate (OMP).</text>
</comment>
<comment type="catalytic activity">
    <reaction evidence="1">
        <text>orotidine 5'-phosphate + diphosphate = orotate + 5-phospho-alpha-D-ribose 1-diphosphate</text>
        <dbReference type="Rhea" id="RHEA:10380"/>
        <dbReference type="ChEBI" id="CHEBI:30839"/>
        <dbReference type="ChEBI" id="CHEBI:33019"/>
        <dbReference type="ChEBI" id="CHEBI:57538"/>
        <dbReference type="ChEBI" id="CHEBI:58017"/>
        <dbReference type="EC" id="2.4.2.10"/>
    </reaction>
</comment>
<comment type="cofactor">
    <cofactor evidence="1">
        <name>Mg(2+)</name>
        <dbReference type="ChEBI" id="CHEBI:18420"/>
    </cofactor>
</comment>
<comment type="pathway">
    <text evidence="1">Pyrimidine metabolism; UMP biosynthesis via de novo pathway; UMP from orotate: step 1/2.</text>
</comment>
<comment type="subunit">
    <text evidence="1">Homodimer.</text>
</comment>
<comment type="similarity">
    <text evidence="1">Belongs to the purine/pyrimidine phosphoribosyltransferase family. PyrE subfamily.</text>
</comment>
<accession>A0RY85</accession>
<gene>
    <name evidence="1" type="primary">pyrE</name>
    <name type="ordered locus">CENSYa_1686</name>
</gene>
<keyword id="KW-0328">Glycosyltransferase</keyword>
<keyword id="KW-0460">Magnesium</keyword>
<keyword id="KW-0665">Pyrimidine biosynthesis</keyword>
<keyword id="KW-1185">Reference proteome</keyword>
<keyword id="KW-0808">Transferase</keyword>
<sequence length="200" mass="20886">MGFVDGFSAFLHSSGAVKFGDFELSGGGRSPYYFDLRSVPSHPHQFRGMIRGLLDSVISEVGLDRFDTLASIPTGGLVVASALAIEAVKPLVYARAAAKGHGTGRTVEGIVRYGARALIIDDVATTGGSVIRAAESLRAAGAIVTDAFVVIDRMEGAEGRLGAEGIKLHRLAGALEVARSLHAAGLIPGDVMRQVEGRTR</sequence>
<proteinExistence type="inferred from homology"/>
<organism>
    <name type="scientific">Cenarchaeum symbiosum (strain A)</name>
    <dbReference type="NCBI Taxonomy" id="414004"/>
    <lineage>
        <taxon>Archaea</taxon>
        <taxon>Nitrososphaerota</taxon>
        <taxon>Candidatus Cenarchaeales</taxon>
        <taxon>Candidatus Cenarchaeaceae</taxon>
        <taxon>Candidatus Cenarchaeum</taxon>
    </lineage>
</organism>
<name>PYRE_CENSY</name>
<evidence type="ECO:0000255" key="1">
    <source>
        <dbReference type="HAMAP-Rule" id="MF_01208"/>
    </source>
</evidence>
<protein>
    <recommendedName>
        <fullName evidence="1">Orotate phosphoribosyltransferase</fullName>
        <shortName evidence="1">OPRT</shortName>
        <shortName evidence="1">OPRTase</shortName>
        <ecNumber evidence="1">2.4.2.10</ecNumber>
    </recommendedName>
</protein>